<organism>
    <name type="scientific">Clostridium beijerinckii (strain ATCC 51743 / NCIMB 8052)</name>
    <name type="common">Clostridium acetobutylicum</name>
    <dbReference type="NCBI Taxonomy" id="290402"/>
    <lineage>
        <taxon>Bacteria</taxon>
        <taxon>Bacillati</taxon>
        <taxon>Bacillota</taxon>
        <taxon>Clostridia</taxon>
        <taxon>Eubacteriales</taxon>
        <taxon>Clostridiaceae</taxon>
        <taxon>Clostridium</taxon>
    </lineage>
</organism>
<comment type="function">
    <text evidence="1">Catalyzes the attachment of glutamate to tRNA(Glu) in a two-step reaction: glutamate is first activated by ATP to form Glu-AMP and then transferred to the acceptor end of tRNA(Glu).</text>
</comment>
<comment type="catalytic activity">
    <reaction evidence="1">
        <text>tRNA(Glu) + L-glutamate + ATP = L-glutamyl-tRNA(Glu) + AMP + diphosphate</text>
        <dbReference type="Rhea" id="RHEA:23540"/>
        <dbReference type="Rhea" id="RHEA-COMP:9663"/>
        <dbReference type="Rhea" id="RHEA-COMP:9680"/>
        <dbReference type="ChEBI" id="CHEBI:29985"/>
        <dbReference type="ChEBI" id="CHEBI:30616"/>
        <dbReference type="ChEBI" id="CHEBI:33019"/>
        <dbReference type="ChEBI" id="CHEBI:78442"/>
        <dbReference type="ChEBI" id="CHEBI:78520"/>
        <dbReference type="ChEBI" id="CHEBI:456215"/>
        <dbReference type="EC" id="6.1.1.17"/>
    </reaction>
</comment>
<comment type="subunit">
    <text evidence="1">Monomer.</text>
</comment>
<comment type="subcellular location">
    <subcellularLocation>
        <location evidence="1">Cytoplasm</location>
    </subcellularLocation>
</comment>
<comment type="similarity">
    <text evidence="1">Belongs to the class-I aminoacyl-tRNA synthetase family. Glutamate--tRNA ligase type 1 subfamily.</text>
</comment>
<feature type="chain" id="PRO_0000367647" description="Glutamate--tRNA ligase">
    <location>
        <begin position="1"/>
        <end position="553"/>
    </location>
</feature>
<feature type="short sequence motif" description="'HIGH' region" evidence="1">
    <location>
        <begin position="41"/>
        <end position="51"/>
    </location>
</feature>
<feature type="short sequence motif" description="'KMSKS' region" evidence="1">
    <location>
        <begin position="293"/>
        <end position="297"/>
    </location>
</feature>
<feature type="binding site" evidence="1">
    <location>
        <position position="296"/>
    </location>
    <ligand>
        <name>ATP</name>
        <dbReference type="ChEBI" id="CHEBI:30616"/>
    </ligand>
</feature>
<reference key="1">
    <citation type="submission" date="2007-06" db="EMBL/GenBank/DDBJ databases">
        <title>Complete sequence of Clostridium beijerinckii NCIMB 8052.</title>
        <authorList>
            <consortium name="US DOE Joint Genome Institute"/>
            <person name="Copeland A."/>
            <person name="Lucas S."/>
            <person name="Lapidus A."/>
            <person name="Barry K."/>
            <person name="Detter J.C."/>
            <person name="Glavina del Rio T."/>
            <person name="Hammon N."/>
            <person name="Israni S."/>
            <person name="Dalin E."/>
            <person name="Tice H."/>
            <person name="Pitluck S."/>
            <person name="Sims D."/>
            <person name="Brettin T."/>
            <person name="Bruce D."/>
            <person name="Tapia R."/>
            <person name="Brainard J."/>
            <person name="Schmutz J."/>
            <person name="Larimer F."/>
            <person name="Land M."/>
            <person name="Hauser L."/>
            <person name="Kyrpides N."/>
            <person name="Mikhailova N."/>
            <person name="Bennet G."/>
            <person name="Cann I."/>
            <person name="Chen J.-S."/>
            <person name="Contreras A.L."/>
            <person name="Jones D."/>
            <person name="Kashket E."/>
            <person name="Mitchell W."/>
            <person name="Stoddard S."/>
            <person name="Schwarz W."/>
            <person name="Qureshi N."/>
            <person name="Young M."/>
            <person name="Shi Z."/>
            <person name="Ezeji T."/>
            <person name="White B."/>
            <person name="Blaschek H."/>
            <person name="Richardson P."/>
        </authorList>
    </citation>
    <scope>NUCLEOTIDE SEQUENCE [LARGE SCALE GENOMIC DNA]</scope>
    <source>
        <strain>ATCC 51743 / NCIMB 8052</strain>
    </source>
</reference>
<sequence>MSFEKLADIIFGNVEHTTEYYVEKYPKRSLKEGARVTRYAPSPTGFQHIGGVFAALINERLASQSEGVFYLRIEDTDQKREVEGAIEDTIATMHNFGMDFSEGMTGEETSKGEYGPYRQSQRAEIYNTFAKDLLIKGLAYPDFCTPEELAQLRERQIANKITPGYYGEYAKFRNITEEEAIKRIENGEKYIIRLKSPGNPEKRVEFHDLIKGDISFPENNQDVVLIKGDGLPTYHFAHAIDDYLMRTTDVIRGEEWLSSLPIHVQLFEVLGFEAPRYAHIPTIMKQDGGSKRKLSKRKDAEAAVSYYKEVGFPVVTVIEYLLNIVNSTYEEWRAENPKADYHEFEVHLEKMGKSGALFDLVKLNDVSKDRIAAMKATDVYEYYTAWAKEFDAEMYKLVTENETMAKEIFNIDKEGPKPRKDFAKWDEVKDKIFYFFDELFYKESAEQIELPKGVTLEAAKEIVETYKKEFKFDVESQEAWFDDLKEIGIRLGYCANRKEFKANPDQYKGMISDVAGAVRAALTHRTNSPDIYTIMQIIGEENTRNRFDKFLNI</sequence>
<evidence type="ECO:0000255" key="1">
    <source>
        <dbReference type="HAMAP-Rule" id="MF_00022"/>
    </source>
</evidence>
<proteinExistence type="inferred from homology"/>
<name>SYE_CLOB8</name>
<gene>
    <name evidence="1" type="primary">gltX</name>
    <name type="ordered locus">Cbei_1427</name>
</gene>
<keyword id="KW-0030">Aminoacyl-tRNA synthetase</keyword>
<keyword id="KW-0067">ATP-binding</keyword>
<keyword id="KW-0963">Cytoplasm</keyword>
<keyword id="KW-0436">Ligase</keyword>
<keyword id="KW-0547">Nucleotide-binding</keyword>
<keyword id="KW-0648">Protein biosynthesis</keyword>
<dbReference type="EC" id="6.1.1.17" evidence="1"/>
<dbReference type="EMBL" id="CP000721">
    <property type="protein sequence ID" value="ABR33605.1"/>
    <property type="molecule type" value="Genomic_DNA"/>
</dbReference>
<dbReference type="RefSeq" id="WP_011968759.1">
    <property type="nucleotide sequence ID" value="NC_009617.1"/>
</dbReference>
<dbReference type="SMR" id="A6LTC5"/>
<dbReference type="KEGG" id="cbe:Cbei_1427"/>
<dbReference type="eggNOG" id="COG0008">
    <property type="taxonomic scope" value="Bacteria"/>
</dbReference>
<dbReference type="HOGENOM" id="CLU_015768_6_3_9"/>
<dbReference type="Proteomes" id="UP000000565">
    <property type="component" value="Chromosome"/>
</dbReference>
<dbReference type="GO" id="GO:0005829">
    <property type="term" value="C:cytosol"/>
    <property type="evidence" value="ECO:0007669"/>
    <property type="project" value="TreeGrafter"/>
</dbReference>
<dbReference type="GO" id="GO:0005524">
    <property type="term" value="F:ATP binding"/>
    <property type="evidence" value="ECO:0007669"/>
    <property type="project" value="UniProtKB-UniRule"/>
</dbReference>
<dbReference type="GO" id="GO:0004818">
    <property type="term" value="F:glutamate-tRNA ligase activity"/>
    <property type="evidence" value="ECO:0007669"/>
    <property type="project" value="UniProtKB-UniRule"/>
</dbReference>
<dbReference type="GO" id="GO:0000049">
    <property type="term" value="F:tRNA binding"/>
    <property type="evidence" value="ECO:0007669"/>
    <property type="project" value="InterPro"/>
</dbReference>
<dbReference type="GO" id="GO:0006424">
    <property type="term" value="P:glutamyl-tRNA aminoacylation"/>
    <property type="evidence" value="ECO:0007669"/>
    <property type="project" value="UniProtKB-UniRule"/>
</dbReference>
<dbReference type="Gene3D" id="1.10.10.350">
    <property type="match status" value="1"/>
</dbReference>
<dbReference type="Gene3D" id="3.40.50.620">
    <property type="entry name" value="HUPs"/>
    <property type="match status" value="1"/>
</dbReference>
<dbReference type="HAMAP" id="MF_00022">
    <property type="entry name" value="Glu_tRNA_synth_type1"/>
    <property type="match status" value="1"/>
</dbReference>
<dbReference type="InterPro" id="IPR045462">
    <property type="entry name" value="aa-tRNA-synth_I_cd-bd"/>
</dbReference>
<dbReference type="InterPro" id="IPR020751">
    <property type="entry name" value="aa-tRNA-synth_I_codon-bd_sub2"/>
</dbReference>
<dbReference type="InterPro" id="IPR008925">
    <property type="entry name" value="aa_tRNA-synth_I_cd-bd_sf"/>
</dbReference>
<dbReference type="InterPro" id="IPR004527">
    <property type="entry name" value="Glu-tRNA-ligase_bac/mito"/>
</dbReference>
<dbReference type="InterPro" id="IPR000924">
    <property type="entry name" value="Glu/Gln-tRNA-synth"/>
</dbReference>
<dbReference type="InterPro" id="IPR020058">
    <property type="entry name" value="Glu/Gln-tRNA-synth_Ib_cat-dom"/>
</dbReference>
<dbReference type="InterPro" id="IPR049940">
    <property type="entry name" value="GluQ/Sye"/>
</dbReference>
<dbReference type="InterPro" id="IPR014729">
    <property type="entry name" value="Rossmann-like_a/b/a_fold"/>
</dbReference>
<dbReference type="NCBIfam" id="TIGR00464">
    <property type="entry name" value="gltX_bact"/>
    <property type="match status" value="1"/>
</dbReference>
<dbReference type="PANTHER" id="PTHR43311">
    <property type="entry name" value="GLUTAMATE--TRNA LIGASE"/>
    <property type="match status" value="1"/>
</dbReference>
<dbReference type="PANTHER" id="PTHR43311:SF2">
    <property type="entry name" value="GLUTAMATE--TRNA LIGASE, MITOCHONDRIAL-RELATED"/>
    <property type="match status" value="1"/>
</dbReference>
<dbReference type="Pfam" id="PF19269">
    <property type="entry name" value="Anticodon_2"/>
    <property type="match status" value="1"/>
</dbReference>
<dbReference type="Pfam" id="PF00749">
    <property type="entry name" value="tRNA-synt_1c"/>
    <property type="match status" value="1"/>
</dbReference>
<dbReference type="PRINTS" id="PR00987">
    <property type="entry name" value="TRNASYNTHGLU"/>
</dbReference>
<dbReference type="SUPFAM" id="SSF48163">
    <property type="entry name" value="An anticodon-binding domain of class I aminoacyl-tRNA synthetases"/>
    <property type="match status" value="1"/>
</dbReference>
<dbReference type="SUPFAM" id="SSF52374">
    <property type="entry name" value="Nucleotidylyl transferase"/>
    <property type="match status" value="1"/>
</dbReference>
<accession>A6LTC5</accession>
<protein>
    <recommendedName>
        <fullName evidence="1">Glutamate--tRNA ligase</fullName>
        <ecNumber evidence="1">6.1.1.17</ecNumber>
    </recommendedName>
    <alternativeName>
        <fullName evidence="1">Glutamyl-tRNA synthetase</fullName>
        <shortName evidence="1">GluRS</shortName>
    </alternativeName>
</protein>